<evidence type="ECO:0000255" key="1">
    <source>
        <dbReference type="HAMAP-Rule" id="MF_00385"/>
    </source>
</evidence>
<evidence type="ECO:0000305" key="2"/>
<comment type="similarity">
    <text evidence="1">Belongs to the bacterial ribosomal protein bS16 family.</text>
</comment>
<organism>
    <name type="scientific">Chlamydia abortus (strain DSM 27085 / S26/3)</name>
    <name type="common">Chlamydophila abortus</name>
    <dbReference type="NCBI Taxonomy" id="218497"/>
    <lineage>
        <taxon>Bacteria</taxon>
        <taxon>Pseudomonadati</taxon>
        <taxon>Chlamydiota</taxon>
        <taxon>Chlamydiia</taxon>
        <taxon>Chlamydiales</taxon>
        <taxon>Chlamydiaceae</taxon>
        <taxon>Chlamydia/Chlamydophila group</taxon>
        <taxon>Chlamydia</taxon>
    </lineage>
</organism>
<gene>
    <name evidence="1" type="primary">rpsP</name>
    <name type="ordered locus">CAB627.1</name>
</gene>
<dbReference type="EMBL" id="CR848038">
    <property type="protein sequence ID" value="CAH64074.1"/>
    <property type="molecule type" value="Genomic_DNA"/>
</dbReference>
<dbReference type="RefSeq" id="WP_011097215.1">
    <property type="nucleotide sequence ID" value="NC_004552.2"/>
</dbReference>
<dbReference type="SMR" id="Q5L5L7"/>
<dbReference type="KEGG" id="cab:CAB627A"/>
<dbReference type="eggNOG" id="COG0228">
    <property type="taxonomic scope" value="Bacteria"/>
</dbReference>
<dbReference type="HOGENOM" id="CLU_100590_3_1_0"/>
<dbReference type="OrthoDB" id="9807878at2"/>
<dbReference type="Proteomes" id="UP000001012">
    <property type="component" value="Chromosome"/>
</dbReference>
<dbReference type="GO" id="GO:0005737">
    <property type="term" value="C:cytoplasm"/>
    <property type="evidence" value="ECO:0007669"/>
    <property type="project" value="UniProtKB-ARBA"/>
</dbReference>
<dbReference type="GO" id="GO:0015935">
    <property type="term" value="C:small ribosomal subunit"/>
    <property type="evidence" value="ECO:0007669"/>
    <property type="project" value="TreeGrafter"/>
</dbReference>
<dbReference type="GO" id="GO:0003735">
    <property type="term" value="F:structural constituent of ribosome"/>
    <property type="evidence" value="ECO:0007669"/>
    <property type="project" value="InterPro"/>
</dbReference>
<dbReference type="GO" id="GO:0006412">
    <property type="term" value="P:translation"/>
    <property type="evidence" value="ECO:0007669"/>
    <property type="project" value="UniProtKB-UniRule"/>
</dbReference>
<dbReference type="Gene3D" id="3.30.1320.10">
    <property type="match status" value="1"/>
</dbReference>
<dbReference type="HAMAP" id="MF_00385">
    <property type="entry name" value="Ribosomal_bS16"/>
    <property type="match status" value="1"/>
</dbReference>
<dbReference type="InterPro" id="IPR000307">
    <property type="entry name" value="Ribosomal_bS16"/>
</dbReference>
<dbReference type="InterPro" id="IPR023803">
    <property type="entry name" value="Ribosomal_bS16_dom_sf"/>
</dbReference>
<dbReference type="NCBIfam" id="NF011095">
    <property type="entry name" value="PRK14522.1"/>
    <property type="match status" value="1"/>
</dbReference>
<dbReference type="NCBIfam" id="TIGR00002">
    <property type="entry name" value="S16"/>
    <property type="match status" value="1"/>
</dbReference>
<dbReference type="PANTHER" id="PTHR12919">
    <property type="entry name" value="30S RIBOSOMAL PROTEIN S16"/>
    <property type="match status" value="1"/>
</dbReference>
<dbReference type="PANTHER" id="PTHR12919:SF20">
    <property type="entry name" value="SMALL RIBOSOMAL SUBUNIT PROTEIN BS16M"/>
    <property type="match status" value="1"/>
</dbReference>
<dbReference type="Pfam" id="PF00886">
    <property type="entry name" value="Ribosomal_S16"/>
    <property type="match status" value="1"/>
</dbReference>
<dbReference type="SUPFAM" id="SSF54565">
    <property type="entry name" value="Ribosomal protein S16"/>
    <property type="match status" value="1"/>
</dbReference>
<accession>Q5L5L7</accession>
<feature type="chain" id="PRO_0000243793" description="Small ribosomal subunit protein bS16">
    <location>
        <begin position="1"/>
        <end position="119"/>
    </location>
</feature>
<name>RS16_CHLAB</name>
<proteinExistence type="inferred from homology"/>
<sequence>MALKIRLRQQGRRNHVVYRLVLADVESPRDGRYIELLGWYDPHSTVNYQLKSDRIFHWLNQGAELTEKAAILIKQGAPGVYCELMAKRMARKAAVCQKRRAYRQRRSLKRAEAKQSVVN</sequence>
<reference key="1">
    <citation type="journal article" date="2005" name="Genome Res.">
        <title>The Chlamydophila abortus genome sequence reveals an array of variable proteins that contribute to interspecies variation.</title>
        <authorList>
            <person name="Thomson N.R."/>
            <person name="Yeats C."/>
            <person name="Bell K."/>
            <person name="Holden M.T.G."/>
            <person name="Bentley S.D."/>
            <person name="Livingstone M."/>
            <person name="Cerdeno-Tarraga A.-M."/>
            <person name="Harris B."/>
            <person name="Doggett J."/>
            <person name="Ormond D."/>
            <person name="Mungall K."/>
            <person name="Clarke K."/>
            <person name="Feltwell T."/>
            <person name="Hance Z."/>
            <person name="Sanders M."/>
            <person name="Quail M.A."/>
            <person name="Price C."/>
            <person name="Barrell B.G."/>
            <person name="Parkhill J."/>
            <person name="Longbottom D."/>
        </authorList>
    </citation>
    <scope>NUCLEOTIDE SEQUENCE [LARGE SCALE GENOMIC DNA]</scope>
    <source>
        <strain>DSM 27085 / S26/3</strain>
    </source>
</reference>
<keyword id="KW-0687">Ribonucleoprotein</keyword>
<keyword id="KW-0689">Ribosomal protein</keyword>
<protein>
    <recommendedName>
        <fullName evidence="1">Small ribosomal subunit protein bS16</fullName>
    </recommendedName>
    <alternativeName>
        <fullName evidence="2">30S ribosomal protein S16</fullName>
    </alternativeName>
</protein>